<sequence length="339" mass="36837">MNAPHLLEKILRGERLSSEEAYALAMSIAKNEIDDVQKAGFLVALRCGRERPEELEGFVRALLDLAVKVGPFREAIDTAGTGGDRANLFNVSTAAAVTLAAMGYKVVKHGNRSVTSAAGSADVMEALGYNLNLPPEKATEVFERTGFVYLFAPLYHPAMKNVAHVRKNLGIRTIFNLAGPLSNPARPGYQLVGVSEPWMLDVFAKALKNLGVERAAVVHGRPGIDEVSPTSTTEVYFVDRDKISYSVIDVEDFGAKPLESLEPLKVRDIKEAKEKFLRALRGEFPEAVFLGVNAAMAIHVIDGKDVSEAYLEVVETLARGEAINKLREIIEASGGNPTF</sequence>
<name>TRPD_IGNH4</name>
<organism>
    <name type="scientific">Ignicoccus hospitalis (strain KIN4/I / DSM 18386 / JCM 14125)</name>
    <dbReference type="NCBI Taxonomy" id="453591"/>
    <lineage>
        <taxon>Archaea</taxon>
        <taxon>Thermoproteota</taxon>
        <taxon>Thermoprotei</taxon>
        <taxon>Desulfurococcales</taxon>
        <taxon>Desulfurococcaceae</taxon>
        <taxon>Ignicoccus</taxon>
    </lineage>
</organism>
<evidence type="ECO:0000255" key="1">
    <source>
        <dbReference type="HAMAP-Rule" id="MF_00211"/>
    </source>
</evidence>
<gene>
    <name evidence="1" type="primary">trpD</name>
    <name type="ordered locus">Igni_1442</name>
</gene>
<protein>
    <recommendedName>
        <fullName evidence="1">Anthranilate phosphoribosyltransferase</fullName>
        <ecNumber evidence="1">2.4.2.18</ecNumber>
    </recommendedName>
</protein>
<accession>A8ACG6</accession>
<keyword id="KW-0028">Amino-acid biosynthesis</keyword>
<keyword id="KW-0057">Aromatic amino acid biosynthesis</keyword>
<keyword id="KW-0328">Glycosyltransferase</keyword>
<keyword id="KW-0460">Magnesium</keyword>
<keyword id="KW-0479">Metal-binding</keyword>
<keyword id="KW-1185">Reference proteome</keyword>
<keyword id="KW-0808">Transferase</keyword>
<keyword id="KW-0822">Tryptophan biosynthesis</keyword>
<proteinExistence type="inferred from homology"/>
<dbReference type="EC" id="2.4.2.18" evidence="1"/>
<dbReference type="EMBL" id="CP000816">
    <property type="protein sequence ID" value="ABU82618.1"/>
    <property type="molecule type" value="Genomic_DNA"/>
</dbReference>
<dbReference type="RefSeq" id="WP_012123582.1">
    <property type="nucleotide sequence ID" value="NC_009776.1"/>
</dbReference>
<dbReference type="SMR" id="A8ACG6"/>
<dbReference type="STRING" id="453591.Igni_1442"/>
<dbReference type="GeneID" id="5561717"/>
<dbReference type="KEGG" id="iho:Igni_1442"/>
<dbReference type="eggNOG" id="arCOG02012">
    <property type="taxonomic scope" value="Archaea"/>
</dbReference>
<dbReference type="HOGENOM" id="CLU_034315_2_1_2"/>
<dbReference type="OrthoDB" id="8214at2157"/>
<dbReference type="PhylomeDB" id="A8ACG6"/>
<dbReference type="UniPathway" id="UPA00035">
    <property type="reaction ID" value="UER00041"/>
</dbReference>
<dbReference type="Proteomes" id="UP000000262">
    <property type="component" value="Chromosome"/>
</dbReference>
<dbReference type="GO" id="GO:0005829">
    <property type="term" value="C:cytosol"/>
    <property type="evidence" value="ECO:0007669"/>
    <property type="project" value="TreeGrafter"/>
</dbReference>
<dbReference type="GO" id="GO:0004048">
    <property type="term" value="F:anthranilate phosphoribosyltransferase activity"/>
    <property type="evidence" value="ECO:0007669"/>
    <property type="project" value="UniProtKB-UniRule"/>
</dbReference>
<dbReference type="GO" id="GO:0000287">
    <property type="term" value="F:magnesium ion binding"/>
    <property type="evidence" value="ECO:0007669"/>
    <property type="project" value="UniProtKB-UniRule"/>
</dbReference>
<dbReference type="GO" id="GO:0000162">
    <property type="term" value="P:L-tryptophan biosynthetic process"/>
    <property type="evidence" value="ECO:0007669"/>
    <property type="project" value="UniProtKB-UniRule"/>
</dbReference>
<dbReference type="Gene3D" id="3.40.1030.10">
    <property type="entry name" value="Nucleoside phosphorylase/phosphoribosyltransferase catalytic domain"/>
    <property type="match status" value="1"/>
</dbReference>
<dbReference type="Gene3D" id="1.20.970.10">
    <property type="entry name" value="Transferase, Pyrimidine Nucleoside Phosphorylase, Chain C"/>
    <property type="match status" value="1"/>
</dbReference>
<dbReference type="HAMAP" id="MF_00211">
    <property type="entry name" value="TrpD"/>
    <property type="match status" value="1"/>
</dbReference>
<dbReference type="InterPro" id="IPR005940">
    <property type="entry name" value="Anthranilate_Pribosyl_Tfrase"/>
</dbReference>
<dbReference type="InterPro" id="IPR000312">
    <property type="entry name" value="Glycosyl_Trfase_fam3"/>
</dbReference>
<dbReference type="InterPro" id="IPR017459">
    <property type="entry name" value="Glycosyl_Trfase_fam3_N_dom"/>
</dbReference>
<dbReference type="InterPro" id="IPR036320">
    <property type="entry name" value="Glycosyl_Trfase_fam3_N_dom_sf"/>
</dbReference>
<dbReference type="InterPro" id="IPR035902">
    <property type="entry name" value="Nuc_phospho_transferase"/>
</dbReference>
<dbReference type="NCBIfam" id="TIGR01245">
    <property type="entry name" value="trpD"/>
    <property type="match status" value="1"/>
</dbReference>
<dbReference type="PANTHER" id="PTHR43285">
    <property type="entry name" value="ANTHRANILATE PHOSPHORIBOSYLTRANSFERASE"/>
    <property type="match status" value="1"/>
</dbReference>
<dbReference type="PANTHER" id="PTHR43285:SF2">
    <property type="entry name" value="ANTHRANILATE PHOSPHORIBOSYLTRANSFERASE"/>
    <property type="match status" value="1"/>
</dbReference>
<dbReference type="Pfam" id="PF02885">
    <property type="entry name" value="Glycos_trans_3N"/>
    <property type="match status" value="1"/>
</dbReference>
<dbReference type="Pfam" id="PF00591">
    <property type="entry name" value="Glycos_transf_3"/>
    <property type="match status" value="1"/>
</dbReference>
<dbReference type="SUPFAM" id="SSF52418">
    <property type="entry name" value="Nucleoside phosphorylase/phosphoribosyltransferase catalytic domain"/>
    <property type="match status" value="1"/>
</dbReference>
<dbReference type="SUPFAM" id="SSF47648">
    <property type="entry name" value="Nucleoside phosphorylase/phosphoribosyltransferase N-terminal domain"/>
    <property type="match status" value="1"/>
</dbReference>
<reference key="1">
    <citation type="journal article" date="2008" name="Genome Biol.">
        <title>A genomic analysis of the archaeal system Ignicoccus hospitalis-Nanoarchaeum equitans.</title>
        <authorList>
            <person name="Podar M."/>
            <person name="Anderson I."/>
            <person name="Makarova K.S."/>
            <person name="Elkins J.G."/>
            <person name="Ivanova N."/>
            <person name="Wall M.A."/>
            <person name="Lykidis A."/>
            <person name="Mavromatis K."/>
            <person name="Sun H."/>
            <person name="Hudson M.E."/>
            <person name="Chen W."/>
            <person name="Deciu C."/>
            <person name="Hutchison D."/>
            <person name="Eads J.R."/>
            <person name="Anderson A."/>
            <person name="Fernandes F."/>
            <person name="Szeto E."/>
            <person name="Lapidus A."/>
            <person name="Kyrpides N.C."/>
            <person name="Saier M.H. Jr."/>
            <person name="Richardson P.M."/>
            <person name="Rachel R."/>
            <person name="Huber H."/>
            <person name="Eisen J.A."/>
            <person name="Koonin E.V."/>
            <person name="Keller M."/>
            <person name="Stetter K.O."/>
        </authorList>
    </citation>
    <scope>NUCLEOTIDE SEQUENCE [LARGE SCALE GENOMIC DNA]</scope>
    <source>
        <strain>KIN4/I / DSM 18386 / JCM 14125</strain>
    </source>
</reference>
<comment type="function">
    <text evidence="1">Catalyzes the transfer of the phosphoribosyl group of 5-phosphorylribose-1-pyrophosphate (PRPP) to anthranilate to yield N-(5'-phosphoribosyl)-anthranilate (PRA).</text>
</comment>
<comment type="catalytic activity">
    <reaction evidence="1">
        <text>N-(5-phospho-beta-D-ribosyl)anthranilate + diphosphate = 5-phospho-alpha-D-ribose 1-diphosphate + anthranilate</text>
        <dbReference type="Rhea" id="RHEA:11768"/>
        <dbReference type="ChEBI" id="CHEBI:16567"/>
        <dbReference type="ChEBI" id="CHEBI:18277"/>
        <dbReference type="ChEBI" id="CHEBI:33019"/>
        <dbReference type="ChEBI" id="CHEBI:58017"/>
        <dbReference type="EC" id="2.4.2.18"/>
    </reaction>
</comment>
<comment type="cofactor">
    <cofactor evidence="1">
        <name>Mg(2+)</name>
        <dbReference type="ChEBI" id="CHEBI:18420"/>
    </cofactor>
    <text evidence="1">Binds 2 magnesium ions per monomer.</text>
</comment>
<comment type="pathway">
    <text evidence="1">Amino-acid biosynthesis; L-tryptophan biosynthesis; L-tryptophan from chorismate: step 2/5.</text>
</comment>
<comment type="subunit">
    <text evidence="1">Homodimer.</text>
</comment>
<comment type="similarity">
    <text evidence="1">Belongs to the anthranilate phosphoribosyltransferase family.</text>
</comment>
<feature type="chain" id="PRO_1000043016" description="Anthranilate phosphoribosyltransferase">
    <location>
        <begin position="1"/>
        <end position="339"/>
    </location>
</feature>
<feature type="binding site" evidence="1">
    <location>
        <position position="80"/>
    </location>
    <ligand>
        <name>5-phospho-alpha-D-ribose 1-diphosphate</name>
        <dbReference type="ChEBI" id="CHEBI:58017"/>
    </ligand>
</feature>
<feature type="binding site" evidence="1">
    <location>
        <position position="80"/>
    </location>
    <ligand>
        <name>anthranilate</name>
        <dbReference type="ChEBI" id="CHEBI:16567"/>
        <label>1</label>
    </ligand>
</feature>
<feature type="binding site" evidence="1">
    <location>
        <begin position="83"/>
        <end position="84"/>
    </location>
    <ligand>
        <name>5-phospho-alpha-D-ribose 1-diphosphate</name>
        <dbReference type="ChEBI" id="CHEBI:58017"/>
    </ligand>
</feature>
<feature type="binding site" evidence="1">
    <location>
        <begin position="90"/>
        <end position="93"/>
    </location>
    <ligand>
        <name>5-phospho-alpha-D-ribose 1-diphosphate</name>
        <dbReference type="ChEBI" id="CHEBI:58017"/>
    </ligand>
</feature>
<feature type="binding site" evidence="1">
    <location>
        <position position="92"/>
    </location>
    <ligand>
        <name>Mg(2+)</name>
        <dbReference type="ChEBI" id="CHEBI:18420"/>
        <label>1</label>
    </ligand>
</feature>
<feature type="binding site" evidence="1">
    <location>
        <begin position="108"/>
        <end position="116"/>
    </location>
    <ligand>
        <name>5-phospho-alpha-D-ribose 1-diphosphate</name>
        <dbReference type="ChEBI" id="CHEBI:58017"/>
    </ligand>
</feature>
<feature type="binding site" evidence="1">
    <location>
        <position position="111"/>
    </location>
    <ligand>
        <name>anthranilate</name>
        <dbReference type="ChEBI" id="CHEBI:16567"/>
        <label>1</label>
    </ligand>
</feature>
<feature type="binding site" evidence="1">
    <location>
        <position position="120"/>
    </location>
    <ligand>
        <name>5-phospho-alpha-D-ribose 1-diphosphate</name>
        <dbReference type="ChEBI" id="CHEBI:58017"/>
    </ligand>
</feature>
<feature type="binding site" evidence="1">
    <location>
        <position position="166"/>
    </location>
    <ligand>
        <name>anthranilate</name>
        <dbReference type="ChEBI" id="CHEBI:16567"/>
        <label>2</label>
    </ligand>
</feature>
<feature type="binding site" evidence="1">
    <location>
        <position position="225"/>
    </location>
    <ligand>
        <name>Mg(2+)</name>
        <dbReference type="ChEBI" id="CHEBI:18420"/>
        <label>2</label>
    </ligand>
</feature>
<feature type="binding site" evidence="1">
    <location>
        <position position="226"/>
    </location>
    <ligand>
        <name>Mg(2+)</name>
        <dbReference type="ChEBI" id="CHEBI:18420"/>
        <label>1</label>
    </ligand>
</feature>
<feature type="binding site" evidence="1">
    <location>
        <position position="226"/>
    </location>
    <ligand>
        <name>Mg(2+)</name>
        <dbReference type="ChEBI" id="CHEBI:18420"/>
        <label>2</label>
    </ligand>
</feature>